<name>RNH2_YERPG</name>
<keyword id="KW-0963">Cytoplasm</keyword>
<keyword id="KW-0255">Endonuclease</keyword>
<keyword id="KW-0378">Hydrolase</keyword>
<keyword id="KW-0464">Manganese</keyword>
<keyword id="KW-0479">Metal-binding</keyword>
<keyword id="KW-0540">Nuclease</keyword>
<dbReference type="EC" id="3.1.26.4" evidence="1"/>
<dbReference type="EMBL" id="CP000901">
    <property type="protein sequence ID" value="ABX87990.1"/>
    <property type="molecule type" value="Genomic_DNA"/>
</dbReference>
<dbReference type="RefSeq" id="WP_002212145.1">
    <property type="nucleotide sequence ID" value="NZ_CP009935.1"/>
</dbReference>
<dbReference type="SMR" id="A9R382"/>
<dbReference type="GeneID" id="57977503"/>
<dbReference type="KEGG" id="ypg:YpAngola_A3421"/>
<dbReference type="PATRIC" id="fig|349746.12.peg.116"/>
<dbReference type="GO" id="GO:0005737">
    <property type="term" value="C:cytoplasm"/>
    <property type="evidence" value="ECO:0007669"/>
    <property type="project" value="UniProtKB-SubCell"/>
</dbReference>
<dbReference type="GO" id="GO:0032299">
    <property type="term" value="C:ribonuclease H2 complex"/>
    <property type="evidence" value="ECO:0007669"/>
    <property type="project" value="TreeGrafter"/>
</dbReference>
<dbReference type="GO" id="GO:0030145">
    <property type="term" value="F:manganese ion binding"/>
    <property type="evidence" value="ECO:0007669"/>
    <property type="project" value="UniProtKB-UniRule"/>
</dbReference>
<dbReference type="GO" id="GO:0003723">
    <property type="term" value="F:RNA binding"/>
    <property type="evidence" value="ECO:0007669"/>
    <property type="project" value="InterPro"/>
</dbReference>
<dbReference type="GO" id="GO:0004523">
    <property type="term" value="F:RNA-DNA hybrid ribonuclease activity"/>
    <property type="evidence" value="ECO:0007669"/>
    <property type="project" value="UniProtKB-UniRule"/>
</dbReference>
<dbReference type="GO" id="GO:0043137">
    <property type="term" value="P:DNA replication, removal of RNA primer"/>
    <property type="evidence" value="ECO:0007669"/>
    <property type="project" value="TreeGrafter"/>
</dbReference>
<dbReference type="GO" id="GO:0006298">
    <property type="term" value="P:mismatch repair"/>
    <property type="evidence" value="ECO:0007669"/>
    <property type="project" value="TreeGrafter"/>
</dbReference>
<dbReference type="CDD" id="cd07182">
    <property type="entry name" value="RNase_HII_bacteria_HII_like"/>
    <property type="match status" value="1"/>
</dbReference>
<dbReference type="FunFam" id="3.30.420.10:FF:000006">
    <property type="entry name" value="Ribonuclease HII"/>
    <property type="match status" value="1"/>
</dbReference>
<dbReference type="Gene3D" id="3.30.420.10">
    <property type="entry name" value="Ribonuclease H-like superfamily/Ribonuclease H"/>
    <property type="match status" value="1"/>
</dbReference>
<dbReference type="HAMAP" id="MF_00052_B">
    <property type="entry name" value="RNase_HII_B"/>
    <property type="match status" value="1"/>
</dbReference>
<dbReference type="InterPro" id="IPR022898">
    <property type="entry name" value="RNase_HII"/>
</dbReference>
<dbReference type="InterPro" id="IPR001352">
    <property type="entry name" value="RNase_HII/HIII"/>
</dbReference>
<dbReference type="InterPro" id="IPR024567">
    <property type="entry name" value="RNase_HII/HIII_dom"/>
</dbReference>
<dbReference type="InterPro" id="IPR012337">
    <property type="entry name" value="RNaseH-like_sf"/>
</dbReference>
<dbReference type="InterPro" id="IPR036397">
    <property type="entry name" value="RNaseH_sf"/>
</dbReference>
<dbReference type="NCBIfam" id="NF000594">
    <property type="entry name" value="PRK00015.1-1"/>
    <property type="match status" value="1"/>
</dbReference>
<dbReference type="NCBIfam" id="NF000595">
    <property type="entry name" value="PRK00015.1-3"/>
    <property type="match status" value="1"/>
</dbReference>
<dbReference type="NCBIfam" id="NF000596">
    <property type="entry name" value="PRK00015.1-4"/>
    <property type="match status" value="1"/>
</dbReference>
<dbReference type="PANTHER" id="PTHR10954">
    <property type="entry name" value="RIBONUCLEASE H2 SUBUNIT A"/>
    <property type="match status" value="1"/>
</dbReference>
<dbReference type="PANTHER" id="PTHR10954:SF18">
    <property type="entry name" value="RIBONUCLEASE HII"/>
    <property type="match status" value="1"/>
</dbReference>
<dbReference type="Pfam" id="PF01351">
    <property type="entry name" value="RNase_HII"/>
    <property type="match status" value="1"/>
</dbReference>
<dbReference type="SUPFAM" id="SSF53098">
    <property type="entry name" value="Ribonuclease H-like"/>
    <property type="match status" value="1"/>
</dbReference>
<dbReference type="PROSITE" id="PS51975">
    <property type="entry name" value="RNASE_H_2"/>
    <property type="match status" value="1"/>
</dbReference>
<organism>
    <name type="scientific">Yersinia pestis bv. Antiqua (strain Angola)</name>
    <dbReference type="NCBI Taxonomy" id="349746"/>
    <lineage>
        <taxon>Bacteria</taxon>
        <taxon>Pseudomonadati</taxon>
        <taxon>Pseudomonadota</taxon>
        <taxon>Gammaproteobacteria</taxon>
        <taxon>Enterobacterales</taxon>
        <taxon>Yersiniaceae</taxon>
        <taxon>Yersinia</taxon>
    </lineage>
</organism>
<protein>
    <recommendedName>
        <fullName evidence="1">Ribonuclease HII</fullName>
        <shortName evidence="1">RNase HII</shortName>
        <ecNumber evidence="1">3.1.26.4</ecNumber>
    </recommendedName>
</protein>
<reference key="1">
    <citation type="journal article" date="2010" name="J. Bacteriol.">
        <title>Genome sequence of the deep-rooted Yersinia pestis strain Angola reveals new insights into the evolution and pangenome of the plague bacterium.</title>
        <authorList>
            <person name="Eppinger M."/>
            <person name="Worsham P.L."/>
            <person name="Nikolich M.P."/>
            <person name="Riley D.R."/>
            <person name="Sebastian Y."/>
            <person name="Mou S."/>
            <person name="Achtman M."/>
            <person name="Lindler L.E."/>
            <person name="Ravel J."/>
        </authorList>
    </citation>
    <scope>NUCLEOTIDE SEQUENCE [LARGE SCALE GENOMIC DNA]</scope>
    <source>
        <strain>Angola</strain>
    </source>
</reference>
<gene>
    <name evidence="1" type="primary">rnhB</name>
    <name type="ordered locus">YpAngola_A3421</name>
</gene>
<sequence length="198" mass="21648">MSETFIYPQANLIAGVDEVGRGPLVGAVVTAAVILDPNRPIVGLADSKKLSEKRRLSLYDEITEKALSWSLGRAEPEEIDQLNILHATMLAMQRAVSGLHIVPDYVLIDGNRCPKLQMPSLAVVKGDSRVAEISAASILAKVTRDREMTELDLLFPEYGFAQHKGYPTAFHLEKLAALGATVHHRRSFGPVKRVLGLV</sequence>
<comment type="function">
    <text evidence="1">Endonuclease that specifically degrades the RNA of RNA-DNA hybrids.</text>
</comment>
<comment type="catalytic activity">
    <reaction evidence="1">
        <text>Endonucleolytic cleavage to 5'-phosphomonoester.</text>
        <dbReference type="EC" id="3.1.26.4"/>
    </reaction>
</comment>
<comment type="cofactor">
    <cofactor evidence="1">
        <name>Mn(2+)</name>
        <dbReference type="ChEBI" id="CHEBI:29035"/>
    </cofactor>
    <cofactor evidence="1">
        <name>Mg(2+)</name>
        <dbReference type="ChEBI" id="CHEBI:18420"/>
    </cofactor>
    <text evidence="1">Manganese or magnesium. Binds 1 divalent metal ion per monomer in the absence of substrate. May bind a second metal ion after substrate binding.</text>
</comment>
<comment type="subcellular location">
    <subcellularLocation>
        <location evidence="1">Cytoplasm</location>
    </subcellularLocation>
</comment>
<comment type="similarity">
    <text evidence="1">Belongs to the RNase HII family.</text>
</comment>
<evidence type="ECO:0000255" key="1">
    <source>
        <dbReference type="HAMAP-Rule" id="MF_00052"/>
    </source>
</evidence>
<evidence type="ECO:0000255" key="2">
    <source>
        <dbReference type="PROSITE-ProRule" id="PRU01319"/>
    </source>
</evidence>
<proteinExistence type="inferred from homology"/>
<feature type="chain" id="PRO_1000091671" description="Ribonuclease HII">
    <location>
        <begin position="1"/>
        <end position="198"/>
    </location>
</feature>
<feature type="domain" description="RNase H type-2" evidence="2">
    <location>
        <begin position="11"/>
        <end position="198"/>
    </location>
</feature>
<feature type="binding site" evidence="1">
    <location>
        <position position="17"/>
    </location>
    <ligand>
        <name>a divalent metal cation</name>
        <dbReference type="ChEBI" id="CHEBI:60240"/>
    </ligand>
</feature>
<feature type="binding site" evidence="1">
    <location>
        <position position="18"/>
    </location>
    <ligand>
        <name>a divalent metal cation</name>
        <dbReference type="ChEBI" id="CHEBI:60240"/>
    </ligand>
</feature>
<feature type="binding site" evidence="1">
    <location>
        <position position="109"/>
    </location>
    <ligand>
        <name>a divalent metal cation</name>
        <dbReference type="ChEBI" id="CHEBI:60240"/>
    </ligand>
</feature>
<accession>A9R382</accession>